<organism>
    <name type="scientific">Homo sapiens</name>
    <name type="common">Human</name>
    <dbReference type="NCBI Taxonomy" id="9606"/>
    <lineage>
        <taxon>Eukaryota</taxon>
        <taxon>Metazoa</taxon>
        <taxon>Chordata</taxon>
        <taxon>Craniata</taxon>
        <taxon>Vertebrata</taxon>
        <taxon>Euteleostomi</taxon>
        <taxon>Mammalia</taxon>
        <taxon>Eutheria</taxon>
        <taxon>Euarchontoglires</taxon>
        <taxon>Primates</taxon>
        <taxon>Haplorrhini</taxon>
        <taxon>Catarrhini</taxon>
        <taxon>Hominidae</taxon>
        <taxon>Homo</taxon>
    </lineage>
</organism>
<sequence>MEEEQDLPEQPVKKAKMQESGEQTISQVSNPDVSDQKPETSSLASNLPMSEEIMTCTDYIPRSSNDYTSQMYSAKPYAHILSVPVSETAYPGQTQYQTLQQTQPYAVYPQATQTYGLPPFGALWPGMKPESGLIQTPSPSQHSVLTCTTGLTTSQPSPAHYSYPIQASSTNASLISTSSTIANIPAAAVASISNQDYPTYTILGQNQYQACYPSSSFGVTGQTNSDAESTTLAATTYQSEKPSVMAPAPAAQRLSSGDPSTSPSLSQTTPSKDTDDQSRKNMTSKNRGKRKADATSSQDSELERVFLWDLDETIIIFHSLLTGSYAQKYGKDPTVVIGSGLTMEEMIFEVADTHLFFNDLEECDQVHVEDVASDDNGQDLSNYSFSTDGFSGSGGSGSHGSSVGVQGGVDWMRKLAFRYRKVREIYDKHKSNVGGLLSPQRKEALQRLRAEIEVLTDSWLGTALKSLLLIQSRKNCVNVLITTTQLVPALAKVLLYGLGEIFPIENIYSATKIGKESCFERIVSRFGKKVTYVVIGDGRDEEIAAKQHNMPFWRITNHGDLVSLHQALELDFL</sequence>
<reference key="1">
    <citation type="journal article" date="1997" name="Nat. Genet.">
        <title>A human homologue of the Drosophila eyes absent gene underlies branchio-oto-renal (BOR) syndrome and identifies a novel gene family.</title>
        <authorList>
            <person name="Abdelhak S."/>
            <person name="Kalatzis V."/>
            <person name="Heilig R."/>
            <person name="Compain S."/>
            <person name="Samson D."/>
            <person name="Vincent C."/>
            <person name="Weil D."/>
            <person name="Cruaud C."/>
            <person name="Sahly I."/>
            <person name="Leibovici M."/>
            <person name="Bitner-Glindzicz M."/>
            <person name="Francis M."/>
            <person name="Lacombe D."/>
            <person name="Vigneron J."/>
            <person name="Charachon R."/>
            <person name="Boven K."/>
            <person name="Bedbeder P."/>
            <person name="van Regemorter N."/>
            <person name="Weissenbach J."/>
            <person name="Petit C."/>
        </authorList>
    </citation>
    <scope>NUCLEOTIDE SEQUENCE [GENOMIC DNA] (ISOFORM 1)</scope>
    <source>
        <tissue>Embryo</tissue>
    </source>
</reference>
<reference key="2">
    <citation type="journal article" date="1997" name="Genome Res.">
        <title>Cloning and characterization of two vertebrate homologs of the Drosophila eyes absent gene.</title>
        <authorList>
            <person name="Zimmerman J.E."/>
            <person name="Bui Q.T."/>
            <person name="Steingrimsson E."/>
            <person name="Nagle D.L."/>
            <person name="Fu W."/>
            <person name="Genin A."/>
            <person name="Spinner N.B."/>
            <person name="Copeland N.G."/>
            <person name="Jenkins N.A."/>
            <person name="Bucan M."/>
            <person name="Bonini N.M."/>
        </authorList>
    </citation>
    <scope>NUCLEOTIDE SEQUENCE [MRNA] (ISOFORM 2)</scope>
    <source>
        <tissue>Retina</tissue>
    </source>
</reference>
<reference key="3">
    <citation type="journal article" date="2004" name="Nat. Genet.">
        <title>Complete sequencing and characterization of 21,243 full-length human cDNAs.</title>
        <authorList>
            <person name="Ota T."/>
            <person name="Suzuki Y."/>
            <person name="Nishikawa T."/>
            <person name="Otsuki T."/>
            <person name="Sugiyama T."/>
            <person name="Irie R."/>
            <person name="Wakamatsu A."/>
            <person name="Hayashi K."/>
            <person name="Sato H."/>
            <person name="Nagai K."/>
            <person name="Kimura K."/>
            <person name="Makita H."/>
            <person name="Sekine M."/>
            <person name="Obayashi M."/>
            <person name="Nishi T."/>
            <person name="Shibahara T."/>
            <person name="Tanaka T."/>
            <person name="Ishii S."/>
            <person name="Yamamoto J."/>
            <person name="Saito K."/>
            <person name="Kawai Y."/>
            <person name="Isono Y."/>
            <person name="Nakamura Y."/>
            <person name="Nagahari K."/>
            <person name="Murakami K."/>
            <person name="Yasuda T."/>
            <person name="Iwayanagi T."/>
            <person name="Wagatsuma M."/>
            <person name="Shiratori A."/>
            <person name="Sudo H."/>
            <person name="Hosoiri T."/>
            <person name="Kaku Y."/>
            <person name="Kodaira H."/>
            <person name="Kondo H."/>
            <person name="Sugawara M."/>
            <person name="Takahashi M."/>
            <person name="Kanda K."/>
            <person name="Yokoi T."/>
            <person name="Furuya T."/>
            <person name="Kikkawa E."/>
            <person name="Omura Y."/>
            <person name="Abe K."/>
            <person name="Kamihara K."/>
            <person name="Katsuta N."/>
            <person name="Sato K."/>
            <person name="Tanikawa M."/>
            <person name="Yamazaki M."/>
            <person name="Ninomiya K."/>
            <person name="Ishibashi T."/>
            <person name="Yamashita H."/>
            <person name="Murakawa K."/>
            <person name="Fujimori K."/>
            <person name="Tanai H."/>
            <person name="Kimata M."/>
            <person name="Watanabe M."/>
            <person name="Hiraoka S."/>
            <person name="Chiba Y."/>
            <person name="Ishida S."/>
            <person name="Ono Y."/>
            <person name="Takiguchi S."/>
            <person name="Watanabe S."/>
            <person name="Yosida M."/>
            <person name="Hotuta T."/>
            <person name="Kusano J."/>
            <person name="Kanehori K."/>
            <person name="Takahashi-Fujii A."/>
            <person name="Hara H."/>
            <person name="Tanase T.-O."/>
            <person name="Nomura Y."/>
            <person name="Togiya S."/>
            <person name="Komai F."/>
            <person name="Hara R."/>
            <person name="Takeuchi K."/>
            <person name="Arita M."/>
            <person name="Imose N."/>
            <person name="Musashino K."/>
            <person name="Yuuki H."/>
            <person name="Oshima A."/>
            <person name="Sasaki N."/>
            <person name="Aotsuka S."/>
            <person name="Yoshikawa Y."/>
            <person name="Matsunawa H."/>
            <person name="Ichihara T."/>
            <person name="Shiohata N."/>
            <person name="Sano S."/>
            <person name="Moriya S."/>
            <person name="Momiyama H."/>
            <person name="Satoh N."/>
            <person name="Takami S."/>
            <person name="Terashima Y."/>
            <person name="Suzuki O."/>
            <person name="Nakagawa S."/>
            <person name="Senoh A."/>
            <person name="Mizoguchi H."/>
            <person name="Goto Y."/>
            <person name="Shimizu F."/>
            <person name="Wakebe H."/>
            <person name="Hishigaki H."/>
            <person name="Watanabe T."/>
            <person name="Sugiyama A."/>
            <person name="Takemoto M."/>
            <person name="Kawakami B."/>
            <person name="Yamazaki M."/>
            <person name="Watanabe K."/>
            <person name="Kumagai A."/>
            <person name="Itakura S."/>
            <person name="Fukuzumi Y."/>
            <person name="Fujimori Y."/>
            <person name="Komiyama M."/>
            <person name="Tashiro H."/>
            <person name="Tanigami A."/>
            <person name="Fujiwara T."/>
            <person name="Ono T."/>
            <person name="Yamada K."/>
            <person name="Fujii Y."/>
            <person name="Ozaki K."/>
            <person name="Hirao M."/>
            <person name="Ohmori Y."/>
            <person name="Kawabata A."/>
            <person name="Hikiji T."/>
            <person name="Kobatake N."/>
            <person name="Inagaki H."/>
            <person name="Ikema Y."/>
            <person name="Okamoto S."/>
            <person name="Okitani R."/>
            <person name="Kawakami T."/>
            <person name="Noguchi S."/>
            <person name="Itoh T."/>
            <person name="Shigeta K."/>
            <person name="Senba T."/>
            <person name="Matsumura K."/>
            <person name="Nakajima Y."/>
            <person name="Mizuno T."/>
            <person name="Morinaga M."/>
            <person name="Sasaki M."/>
            <person name="Togashi T."/>
            <person name="Oyama M."/>
            <person name="Hata H."/>
            <person name="Watanabe M."/>
            <person name="Komatsu T."/>
            <person name="Mizushima-Sugano J."/>
            <person name="Satoh T."/>
            <person name="Shirai Y."/>
            <person name="Takahashi Y."/>
            <person name="Nakagawa K."/>
            <person name="Okumura K."/>
            <person name="Nagase T."/>
            <person name="Nomura N."/>
            <person name="Kikuchi H."/>
            <person name="Masuho Y."/>
            <person name="Yamashita R."/>
            <person name="Nakai K."/>
            <person name="Yada T."/>
            <person name="Nakamura Y."/>
            <person name="Ohara O."/>
            <person name="Isogai T."/>
            <person name="Sugano S."/>
        </authorList>
    </citation>
    <scope>NUCLEOTIDE SEQUENCE [LARGE SCALE MRNA] (ISOFORMS 1; 4 AND 5)</scope>
    <source>
        <tissue>Brain</tissue>
        <tissue>Hippocampus</tissue>
    </source>
</reference>
<reference key="4">
    <citation type="journal article" date="2006" name="Nature">
        <title>The DNA sequence and biological annotation of human chromosome 1.</title>
        <authorList>
            <person name="Gregory S.G."/>
            <person name="Barlow K.F."/>
            <person name="McLay K.E."/>
            <person name="Kaul R."/>
            <person name="Swarbreck D."/>
            <person name="Dunham A."/>
            <person name="Scott C.E."/>
            <person name="Howe K.L."/>
            <person name="Woodfine K."/>
            <person name="Spencer C.C.A."/>
            <person name="Jones M.C."/>
            <person name="Gillson C."/>
            <person name="Searle S."/>
            <person name="Zhou Y."/>
            <person name="Kokocinski F."/>
            <person name="McDonald L."/>
            <person name="Evans R."/>
            <person name="Phillips K."/>
            <person name="Atkinson A."/>
            <person name="Cooper R."/>
            <person name="Jones C."/>
            <person name="Hall R.E."/>
            <person name="Andrews T.D."/>
            <person name="Lloyd C."/>
            <person name="Ainscough R."/>
            <person name="Almeida J.P."/>
            <person name="Ambrose K.D."/>
            <person name="Anderson F."/>
            <person name="Andrew R.W."/>
            <person name="Ashwell R.I.S."/>
            <person name="Aubin K."/>
            <person name="Babbage A.K."/>
            <person name="Bagguley C.L."/>
            <person name="Bailey J."/>
            <person name="Beasley H."/>
            <person name="Bethel G."/>
            <person name="Bird C.P."/>
            <person name="Bray-Allen S."/>
            <person name="Brown J.Y."/>
            <person name="Brown A.J."/>
            <person name="Buckley D."/>
            <person name="Burton J."/>
            <person name="Bye J."/>
            <person name="Carder C."/>
            <person name="Chapman J.C."/>
            <person name="Clark S.Y."/>
            <person name="Clarke G."/>
            <person name="Clee C."/>
            <person name="Cobley V."/>
            <person name="Collier R.E."/>
            <person name="Corby N."/>
            <person name="Coville G.J."/>
            <person name="Davies J."/>
            <person name="Deadman R."/>
            <person name="Dunn M."/>
            <person name="Earthrowl M."/>
            <person name="Ellington A.G."/>
            <person name="Errington H."/>
            <person name="Frankish A."/>
            <person name="Frankland J."/>
            <person name="French L."/>
            <person name="Garner P."/>
            <person name="Garnett J."/>
            <person name="Gay L."/>
            <person name="Ghori M.R.J."/>
            <person name="Gibson R."/>
            <person name="Gilby L.M."/>
            <person name="Gillett W."/>
            <person name="Glithero R.J."/>
            <person name="Grafham D.V."/>
            <person name="Griffiths C."/>
            <person name="Griffiths-Jones S."/>
            <person name="Grocock R."/>
            <person name="Hammond S."/>
            <person name="Harrison E.S.I."/>
            <person name="Hart E."/>
            <person name="Haugen E."/>
            <person name="Heath P.D."/>
            <person name="Holmes S."/>
            <person name="Holt K."/>
            <person name="Howden P.J."/>
            <person name="Hunt A.R."/>
            <person name="Hunt S.E."/>
            <person name="Hunter G."/>
            <person name="Isherwood J."/>
            <person name="James R."/>
            <person name="Johnson C."/>
            <person name="Johnson D."/>
            <person name="Joy A."/>
            <person name="Kay M."/>
            <person name="Kershaw J.K."/>
            <person name="Kibukawa M."/>
            <person name="Kimberley A.M."/>
            <person name="King A."/>
            <person name="Knights A.J."/>
            <person name="Lad H."/>
            <person name="Laird G."/>
            <person name="Lawlor S."/>
            <person name="Leongamornlert D.A."/>
            <person name="Lloyd D.M."/>
            <person name="Loveland J."/>
            <person name="Lovell J."/>
            <person name="Lush M.J."/>
            <person name="Lyne R."/>
            <person name="Martin S."/>
            <person name="Mashreghi-Mohammadi M."/>
            <person name="Matthews L."/>
            <person name="Matthews N.S.W."/>
            <person name="McLaren S."/>
            <person name="Milne S."/>
            <person name="Mistry S."/>
            <person name="Moore M.J.F."/>
            <person name="Nickerson T."/>
            <person name="O'Dell C.N."/>
            <person name="Oliver K."/>
            <person name="Palmeiri A."/>
            <person name="Palmer S.A."/>
            <person name="Parker A."/>
            <person name="Patel D."/>
            <person name="Pearce A.V."/>
            <person name="Peck A.I."/>
            <person name="Pelan S."/>
            <person name="Phelps K."/>
            <person name="Phillimore B.J."/>
            <person name="Plumb R."/>
            <person name="Rajan J."/>
            <person name="Raymond C."/>
            <person name="Rouse G."/>
            <person name="Saenphimmachak C."/>
            <person name="Sehra H.K."/>
            <person name="Sheridan E."/>
            <person name="Shownkeen R."/>
            <person name="Sims S."/>
            <person name="Skuce C.D."/>
            <person name="Smith M."/>
            <person name="Steward C."/>
            <person name="Subramanian S."/>
            <person name="Sycamore N."/>
            <person name="Tracey A."/>
            <person name="Tromans A."/>
            <person name="Van Helmond Z."/>
            <person name="Wall M."/>
            <person name="Wallis J.M."/>
            <person name="White S."/>
            <person name="Whitehead S.L."/>
            <person name="Wilkinson J.E."/>
            <person name="Willey D.L."/>
            <person name="Williams H."/>
            <person name="Wilming L."/>
            <person name="Wray P.W."/>
            <person name="Wu Z."/>
            <person name="Coulson A."/>
            <person name="Vaudin M."/>
            <person name="Sulston J.E."/>
            <person name="Durbin R.M."/>
            <person name="Hubbard T."/>
            <person name="Wooster R."/>
            <person name="Dunham I."/>
            <person name="Carter N.P."/>
            <person name="McVean G."/>
            <person name="Ross M.T."/>
            <person name="Harrow J."/>
            <person name="Olson M.V."/>
            <person name="Beck S."/>
            <person name="Rogers J."/>
            <person name="Bentley D.R."/>
        </authorList>
    </citation>
    <scope>NUCLEOTIDE SEQUENCE [LARGE SCALE GENOMIC DNA]</scope>
</reference>
<reference key="5">
    <citation type="submission" date="2005-09" db="EMBL/GenBank/DDBJ databases">
        <authorList>
            <person name="Mural R.J."/>
            <person name="Istrail S."/>
            <person name="Sutton G.G."/>
            <person name="Florea L."/>
            <person name="Halpern A.L."/>
            <person name="Mobarry C.M."/>
            <person name="Lippert R."/>
            <person name="Walenz B."/>
            <person name="Shatkay H."/>
            <person name="Dew I."/>
            <person name="Miller J.R."/>
            <person name="Flanigan M.J."/>
            <person name="Edwards N.J."/>
            <person name="Bolanos R."/>
            <person name="Fasulo D."/>
            <person name="Halldorsson B.V."/>
            <person name="Hannenhalli S."/>
            <person name="Turner R."/>
            <person name="Yooseph S."/>
            <person name="Lu F."/>
            <person name="Nusskern D.R."/>
            <person name="Shue B.C."/>
            <person name="Zheng X.H."/>
            <person name="Zhong F."/>
            <person name="Delcher A.L."/>
            <person name="Huson D.H."/>
            <person name="Kravitz S.A."/>
            <person name="Mouchard L."/>
            <person name="Reinert K."/>
            <person name="Remington K.A."/>
            <person name="Clark A.G."/>
            <person name="Waterman M.S."/>
            <person name="Eichler E.E."/>
            <person name="Adams M.D."/>
            <person name="Hunkapiller M.W."/>
            <person name="Myers E.W."/>
            <person name="Venter J.C."/>
        </authorList>
    </citation>
    <scope>NUCLEOTIDE SEQUENCE [LARGE SCALE GENOMIC DNA]</scope>
</reference>
<reference key="6">
    <citation type="journal article" date="2004" name="Genome Res.">
        <title>The status, quality, and expansion of the NIH full-length cDNA project: the Mammalian Gene Collection (MGC).</title>
        <authorList>
            <consortium name="The MGC Project Team"/>
        </authorList>
    </citation>
    <scope>NUCLEOTIDE SEQUENCE [LARGE SCALE MRNA] (ISOFORM 3)</scope>
    <source>
        <tissue>Brain</tissue>
    </source>
</reference>
<reference key="7">
    <citation type="journal article" date="1999" name="Hum. Mol. Genet.">
        <title>EYA4, a novel vertebrate gene related to Drosophila eyes absent.</title>
        <authorList>
            <person name="Borsani G."/>
            <person name="DeGrandi A."/>
            <person name="Ballabio A."/>
            <person name="Bulfone A."/>
            <person name="Bernard L."/>
            <person name="Banfi S."/>
            <person name="Gattuso C."/>
            <person name="Mariani M."/>
            <person name="Dixon M."/>
            <person name="Donnai D."/>
            <person name="Metcalfe K."/>
            <person name="Winter R."/>
            <person name="Robertson M."/>
            <person name="Axton R."/>
            <person name="Brown A."/>
            <person name="van Heyningen V."/>
            <person name="Hanson I."/>
        </authorList>
    </citation>
    <scope>NUCLEOTIDE SEQUENCE [MRNA] OF 413-531</scope>
</reference>
<reference key="8">
    <citation type="journal article" date="2007" name="Science">
        <title>ATM and ATR substrate analysis reveals extensive protein networks responsive to DNA damage.</title>
        <authorList>
            <person name="Matsuoka S."/>
            <person name="Ballif B.A."/>
            <person name="Smogorzewska A."/>
            <person name="McDonald E.R. III"/>
            <person name="Hurov K.E."/>
            <person name="Luo J."/>
            <person name="Bakalarski C.E."/>
            <person name="Zhao Z."/>
            <person name="Solimini N."/>
            <person name="Lerenthal Y."/>
            <person name="Shiloh Y."/>
            <person name="Gygi S.P."/>
            <person name="Elledge S.J."/>
        </authorList>
    </citation>
    <scope>IDENTIFICATION BY MASS SPECTROMETRY [LARGE SCALE ANALYSIS]</scope>
    <source>
        <tissue>Embryonic kidney</tissue>
    </source>
</reference>
<reference key="9">
    <citation type="journal article" date="2009" name="Anal. Chem.">
        <title>Lys-N and trypsin cover complementary parts of the phosphoproteome in a refined SCX-based approach.</title>
        <authorList>
            <person name="Gauci S."/>
            <person name="Helbig A.O."/>
            <person name="Slijper M."/>
            <person name="Krijgsveld J."/>
            <person name="Heck A.J."/>
            <person name="Mohammed S."/>
        </authorList>
    </citation>
    <scope>ACETYLATION [LARGE SCALE ANALYSIS] AT MET-1</scope>
    <scope>IDENTIFICATION BY MASS SPECTROMETRY [LARGE SCALE ANALYSIS]</scope>
</reference>
<reference key="10">
    <citation type="journal article" date="2009" name="J. Biol. Chem.">
        <title>Dephosphorylation of the C-terminal tyrosyl residue of the DNA damage-related histone H2A.X is mediated by the protein phosphatase eyes absent.</title>
        <authorList>
            <person name="Krishnan N."/>
            <person name="Jeong D.G."/>
            <person name="Jung S.-K."/>
            <person name="Ryu S.E."/>
            <person name="Xiao A."/>
            <person name="Allis C.D."/>
            <person name="Kim S.J."/>
            <person name="Tonks N.K."/>
        </authorList>
    </citation>
    <scope>FUNCTION</scope>
    <scope>CATALYTIC ACTIVITY</scope>
    <scope>BIOPHYSICOCHEMICAL PROPERTIES</scope>
</reference>
<reference key="11">
    <citation type="journal article" date="2009" name="Nature">
        <title>Tyrosine dephosphorylation of H2AX modulates apoptosis and survival decisions.</title>
        <authorList>
            <person name="Cook P.J."/>
            <person name="Ju B.G."/>
            <person name="Telese F."/>
            <person name="Wang X."/>
            <person name="Glass C.K."/>
            <person name="Rosenfeld M.G."/>
        </authorList>
    </citation>
    <scope>FUNCTION</scope>
    <scope>CATALYTIC ACTIVITY</scope>
    <scope>SUBCELLULAR LOCATION</scope>
    <scope>PHOSPHORYLATION AT SER-266</scope>
    <scope>MUTAGENESIS OF SER-266 AND ASP-309</scope>
</reference>
<reference key="12">
    <citation type="journal article" date="2011" name="BMC Syst. Biol.">
        <title>Initial characterization of the human central proteome.</title>
        <authorList>
            <person name="Burkard T.R."/>
            <person name="Planyavsky M."/>
            <person name="Kaupe I."/>
            <person name="Breitwieser F.P."/>
            <person name="Buerckstuemmer T."/>
            <person name="Bennett K.L."/>
            <person name="Superti-Furga G."/>
            <person name="Colinge J."/>
        </authorList>
    </citation>
    <scope>IDENTIFICATION BY MASS SPECTROMETRY [LARGE SCALE ANALYSIS]</scope>
</reference>
<reference key="13">
    <citation type="journal article" date="2011" name="Sci. Signal.">
        <title>System-wide temporal characterization of the proteome and phosphoproteome of human embryonic stem cell differentiation.</title>
        <authorList>
            <person name="Rigbolt K.T."/>
            <person name="Prokhorova T.A."/>
            <person name="Akimov V."/>
            <person name="Henningsen J."/>
            <person name="Johansen P.T."/>
            <person name="Kratchmarova I."/>
            <person name="Kassem M."/>
            <person name="Mann M."/>
            <person name="Olsen J.V."/>
            <person name="Blagoev B."/>
        </authorList>
    </citation>
    <scope>PHOSPHORYLATION [LARGE SCALE ANALYSIS] AT SER-472</scope>
    <scope>IDENTIFICATION BY MASS SPECTROMETRY [LARGE SCALE ANALYSIS]</scope>
</reference>
<reference key="14">
    <citation type="journal article" date="2013" name="J. Proteome Res.">
        <title>Toward a comprehensive characterization of a human cancer cell phosphoproteome.</title>
        <authorList>
            <person name="Zhou H."/>
            <person name="Di Palma S."/>
            <person name="Preisinger C."/>
            <person name="Peng M."/>
            <person name="Polat A.N."/>
            <person name="Heck A.J."/>
            <person name="Mohammed S."/>
        </authorList>
    </citation>
    <scope>PHOSPHORYLATION [LARGE SCALE ANALYSIS] AT SER-262 AND SER-438</scope>
    <scope>IDENTIFICATION BY MASS SPECTROMETRY [LARGE SCALE ANALYSIS]</scope>
    <source>
        <tissue>Cervix carcinoma</tissue>
        <tissue>Erythroleukemia</tissue>
    </source>
</reference>
<proteinExistence type="evidence at protein level"/>
<gene>
    <name type="primary">EYA3</name>
</gene>
<accession>Q99504</accession>
<accession>A8K190</accession>
<accession>B4DIR7</accession>
<accession>B4DNZ7</accession>
<accession>O95463</accession>
<accession>Q8IVX7</accession>
<accession>Q99813</accession>
<feature type="chain" id="PRO_0000218648" description="Protein phosphatase EYA3">
    <location>
        <begin position="1"/>
        <end position="573"/>
    </location>
</feature>
<feature type="region of interest" description="Disordered" evidence="3">
    <location>
        <begin position="1"/>
        <end position="46"/>
    </location>
</feature>
<feature type="region of interest" description="Disordered" evidence="3">
    <location>
        <begin position="236"/>
        <end position="296"/>
    </location>
</feature>
<feature type="compositionally biased region" description="Polar residues" evidence="3">
    <location>
        <begin position="20"/>
        <end position="46"/>
    </location>
</feature>
<feature type="compositionally biased region" description="Low complexity" evidence="3">
    <location>
        <begin position="254"/>
        <end position="271"/>
    </location>
</feature>
<feature type="active site" description="Nucleophile" evidence="9">
    <location>
        <position position="309"/>
    </location>
</feature>
<feature type="active site" description="Proton donor" evidence="1">
    <location>
        <position position="311"/>
    </location>
</feature>
<feature type="binding site" evidence="1">
    <location>
        <position position="309"/>
    </location>
    <ligand>
        <name>Mg(2+)</name>
        <dbReference type="ChEBI" id="CHEBI:18420"/>
    </ligand>
</feature>
<feature type="binding site" evidence="1">
    <location>
        <position position="311"/>
    </location>
    <ligand>
        <name>Mg(2+)</name>
        <dbReference type="ChEBI" id="CHEBI:18420"/>
    </ligand>
</feature>
<feature type="binding site" evidence="1">
    <location>
        <position position="537"/>
    </location>
    <ligand>
        <name>Mg(2+)</name>
        <dbReference type="ChEBI" id="CHEBI:18420"/>
    </ligand>
</feature>
<feature type="modified residue" description="N-acetylmethionine" evidence="10">
    <location>
        <position position="1"/>
    </location>
</feature>
<feature type="modified residue" description="Phosphoserine" evidence="12">
    <location>
        <position position="262"/>
    </location>
</feature>
<feature type="modified residue" description="Phosphoserine" evidence="4">
    <location>
        <position position="266"/>
    </location>
</feature>
<feature type="modified residue" description="Phosphoserine" evidence="12">
    <location>
        <position position="438"/>
    </location>
</feature>
<feature type="modified residue" description="Phosphoserine" evidence="11">
    <location>
        <position position="472"/>
    </location>
</feature>
<feature type="splice variant" id="VSP_001493" description="In isoform 2." evidence="8">
    <location>
        <begin position="1"/>
        <end position="126"/>
    </location>
</feature>
<feature type="splice variant" id="VSP_054530" description="In isoform 4." evidence="6">
    <location>
        <begin position="1"/>
        <end position="53"/>
    </location>
</feature>
<feature type="splice variant" id="VSP_054518" description="In isoform 3 and isoform 5." evidence="6 7">
    <location>
        <begin position="121"/>
        <end position="166"/>
    </location>
</feature>
<feature type="splice variant" id="VSP_054519" description="In isoform 3." evidence="7">
    <original>HNMPFWRITNHGDLVSLHQALELDF</original>
    <variation>QLYFLDMEALGCQLEPTALILFIQLSGNLSNYNK</variation>
    <location>
        <begin position="548"/>
        <end position="572"/>
    </location>
</feature>
<feature type="mutagenesis site" description="Fails to form damage-dependent nuclear foci or interact with H2AX." evidence="4">
    <original>S</original>
    <variation>A</variation>
    <location>
        <position position="266"/>
    </location>
</feature>
<feature type="mutagenesis site" description="Loss of tyrosine phosphatase activity toward H2AX." evidence="4">
    <original>D</original>
    <variation>A</variation>
    <location>
        <position position="309"/>
    </location>
</feature>
<feature type="sequence conflict" description="In Ref. 1; CAA71311." evidence="9" ref="1">
    <original>Y</original>
    <variation>D</variation>
    <location>
        <position position="105"/>
    </location>
</feature>
<feature type="sequence conflict" description="In Ref. 2; AAB42066." evidence="9" ref="2">
    <original>H</original>
    <variation>R</variation>
    <location>
        <position position="142"/>
    </location>
</feature>
<feature type="sequence conflict" description="In Ref. 2; AAB42066." evidence="9" ref="2">
    <original>L</original>
    <variation>V</variation>
    <location>
        <position position="151"/>
    </location>
</feature>
<feature type="sequence conflict" description="In Ref. 1; CAA71311." evidence="9" ref="1">
    <original>R</original>
    <variation>K</variation>
    <location>
        <position position="253"/>
    </location>
</feature>
<feature type="sequence conflict" description="In Ref. 2; AAB42066." evidence="9" ref="2">
    <original>T</original>
    <variation>S</variation>
    <location>
        <position position="268"/>
    </location>
</feature>
<feature type="sequence conflict" description="In Ref. 1; CAA71311." evidence="9" ref="1">
    <original>T</original>
    <variation>N</variation>
    <location>
        <position position="283"/>
    </location>
</feature>
<feature type="sequence conflict" description="In Ref. 1; CAA71311." evidence="9" ref="1">
    <original>R</original>
    <variation>K</variation>
    <location>
        <position position="290"/>
    </location>
</feature>
<feature type="sequence conflict" description="In Ref. 2; AAB42066." evidence="9" ref="2">
    <original>V</original>
    <variation>L</variation>
    <location>
        <position position="305"/>
    </location>
</feature>
<feature type="sequence conflict" description="In Ref. 1; CAA71311." evidence="9" ref="1">
    <original>E</original>
    <variation>K</variation>
    <location>
        <position position="345"/>
    </location>
</feature>
<feature type="sequence conflict" description="In Ref. 1; CAA71311." evidence="9" ref="1">
    <original>F</original>
    <variation>S</variation>
    <location>
        <position position="357"/>
    </location>
</feature>
<feature type="sequence conflict" description="In Ref. 1; CAA71311." evidence="9" ref="1">
    <original>E</original>
    <variation>K</variation>
    <location>
        <position position="361"/>
    </location>
</feature>
<feature type="sequence conflict" description="In Ref. 1; CAA71311." evidence="9" ref="1">
    <original>SDDNGQDLS</original>
    <variation>PNDKGQNLN</variation>
    <location>
        <begin position="373"/>
        <end position="381"/>
    </location>
</feature>
<feature type="sequence conflict" description="In Ref. 1; CAA71311." evidence="9" ref="1">
    <original>D</original>
    <variation>N</variation>
    <location>
        <position position="388"/>
    </location>
</feature>
<feature type="sequence conflict" description="In Ref. 1; CAA71311." evidence="9" ref="1">
    <original>RLR</original>
    <variation>KLK</variation>
    <location>
        <begin position="447"/>
        <end position="449"/>
    </location>
</feature>
<feature type="sequence conflict" description="In Ref. 1; CAA71311." evidence="9" ref="1">
    <original>D</original>
    <variation>N</variation>
    <location>
        <position position="457"/>
    </location>
</feature>
<feature type="sequence conflict" description="In Ref. 1; CAA71311." evidence="9" ref="1">
    <original>R</original>
    <variation>K</variation>
    <location>
        <position position="473"/>
    </location>
</feature>
<feature type="sequence conflict" description="In Ref. 2; AAB42066." evidence="9" ref="2">
    <original>L</original>
    <variation>P</variation>
    <location>
        <position position="480"/>
    </location>
</feature>
<feature type="sequence conflict" description="In Ref. 1; CAA71311." evidence="9" ref="1">
    <original>V</original>
    <variation>L</variation>
    <location>
        <position position="487"/>
    </location>
</feature>
<feature type="sequence conflict" description="In Ref. 1; CAA71311." evidence="9" ref="1">
    <original>E</original>
    <variation>K</variation>
    <location>
        <position position="500"/>
    </location>
</feature>
<feature type="sequence conflict" description="In Ref. 1; CAA71311." evidence="9" ref="1">
    <original>SRF</original>
    <variation>TSL</variation>
    <location>
        <begin position="524"/>
        <end position="526"/>
    </location>
</feature>
<feature type="sequence conflict" description="In Ref. 1; CAA71311." evidence="9" ref="1">
    <original>V</original>
    <variation>L</variation>
    <location>
        <position position="530"/>
    </location>
</feature>
<keyword id="KW-0007">Acetylation</keyword>
<keyword id="KW-0010">Activator</keyword>
<keyword id="KW-0025">Alternative splicing</keyword>
<keyword id="KW-0156">Chromatin regulator</keyword>
<keyword id="KW-0963">Cytoplasm</keyword>
<keyword id="KW-0217">Developmental protein</keyword>
<keyword id="KW-0227">DNA damage</keyword>
<keyword id="KW-0234">DNA repair</keyword>
<keyword id="KW-0378">Hydrolase</keyword>
<keyword id="KW-0460">Magnesium</keyword>
<keyword id="KW-0479">Metal-binding</keyword>
<keyword id="KW-0539">Nucleus</keyword>
<keyword id="KW-0597">Phosphoprotein</keyword>
<keyword id="KW-0904">Protein phosphatase</keyword>
<keyword id="KW-1267">Proteomics identification</keyword>
<keyword id="KW-1185">Reference proteome</keyword>
<keyword id="KW-0804">Transcription</keyword>
<keyword id="KW-0805">Transcription regulation</keyword>
<protein>
    <recommendedName>
        <fullName evidence="9">Protein phosphatase EYA3</fullName>
        <ecNumber evidence="4 5">3.1.3.48</ecNumber>
    </recommendedName>
    <alternativeName>
        <fullName>Eyes absent homolog 3</fullName>
    </alternativeName>
</protein>
<dbReference type="EC" id="3.1.3.48" evidence="4 5"/>
<dbReference type="EMBL" id="Y10262">
    <property type="protein sequence ID" value="CAA71311.1"/>
    <property type="molecule type" value="Genomic_DNA"/>
</dbReference>
<dbReference type="EMBL" id="U81602">
    <property type="protein sequence ID" value="AAB42066.1"/>
    <property type="molecule type" value="mRNA"/>
</dbReference>
<dbReference type="EMBL" id="AK289805">
    <property type="protein sequence ID" value="BAF82494.1"/>
    <property type="molecule type" value="mRNA"/>
</dbReference>
<dbReference type="EMBL" id="AK295745">
    <property type="protein sequence ID" value="BAG58579.1"/>
    <property type="molecule type" value="mRNA"/>
</dbReference>
<dbReference type="EMBL" id="AK298129">
    <property type="protein sequence ID" value="BAG60409.1"/>
    <property type="molecule type" value="mRNA"/>
</dbReference>
<dbReference type="EMBL" id="AL137792">
    <property type="status" value="NOT_ANNOTATED_CDS"/>
    <property type="molecule type" value="Genomic_DNA"/>
</dbReference>
<dbReference type="EMBL" id="AL512288">
    <property type="status" value="NOT_ANNOTATED_CDS"/>
    <property type="molecule type" value="Genomic_DNA"/>
</dbReference>
<dbReference type="EMBL" id="CH471059">
    <property type="protein sequence ID" value="EAX07713.1"/>
    <property type="molecule type" value="Genomic_DNA"/>
</dbReference>
<dbReference type="EMBL" id="CH471059">
    <property type="protein sequence ID" value="EAX07714.1"/>
    <property type="molecule type" value="Genomic_DNA"/>
</dbReference>
<dbReference type="EMBL" id="BC041667">
    <property type="protein sequence ID" value="AAH41667.1"/>
    <property type="molecule type" value="mRNA"/>
</dbReference>
<dbReference type="EMBL" id="AJ007991">
    <property type="protein sequence ID" value="CAA07814.1"/>
    <property type="molecule type" value="mRNA"/>
</dbReference>
<dbReference type="CCDS" id="CCDS316.1">
    <molecule id="Q99504-1"/>
</dbReference>
<dbReference type="CCDS" id="CCDS60050.1">
    <molecule id="Q99504-4"/>
</dbReference>
<dbReference type="CCDS" id="CCDS60051.1">
    <molecule id="Q99504-5"/>
</dbReference>
<dbReference type="CCDS" id="CCDS60052.1">
    <molecule id="Q99504-3"/>
</dbReference>
<dbReference type="RefSeq" id="NP_001269489.1">
    <molecule id="Q99504-3"/>
    <property type="nucleotide sequence ID" value="NM_001282560.2"/>
</dbReference>
<dbReference type="RefSeq" id="NP_001269490.1">
    <molecule id="Q99504-5"/>
    <property type="nucleotide sequence ID" value="NM_001282561.2"/>
</dbReference>
<dbReference type="RefSeq" id="NP_001269491.1">
    <molecule id="Q99504-4"/>
    <property type="nucleotide sequence ID" value="NM_001282562.2"/>
</dbReference>
<dbReference type="RefSeq" id="NP_001981.2">
    <molecule id="Q99504-1"/>
    <property type="nucleotide sequence ID" value="NM_001990.3"/>
</dbReference>
<dbReference type="RefSeq" id="XP_047305372.1">
    <molecule id="Q99504-1"/>
    <property type="nucleotide sequence ID" value="XM_047449416.1"/>
</dbReference>
<dbReference type="RefSeq" id="XP_047305373.1">
    <molecule id="Q99504-3"/>
    <property type="nucleotide sequence ID" value="XM_047449417.1"/>
</dbReference>
<dbReference type="RefSeq" id="XP_047305376.1">
    <molecule id="Q99504-5"/>
    <property type="nucleotide sequence ID" value="XM_047449420.1"/>
</dbReference>
<dbReference type="RefSeq" id="XP_054191094.1">
    <molecule id="Q99504-1"/>
    <property type="nucleotide sequence ID" value="XM_054335119.1"/>
</dbReference>
<dbReference type="RefSeq" id="XP_054191096.1">
    <molecule id="Q99504-3"/>
    <property type="nucleotide sequence ID" value="XM_054335121.1"/>
</dbReference>
<dbReference type="RefSeq" id="XP_054191099.1">
    <molecule id="Q99504-5"/>
    <property type="nucleotide sequence ID" value="XM_054335124.1"/>
</dbReference>
<dbReference type="SMR" id="Q99504"/>
<dbReference type="BioGRID" id="108441">
    <property type="interactions" value="70"/>
</dbReference>
<dbReference type="DIP" id="DIP-60448N"/>
<dbReference type="FunCoup" id="Q99504">
    <property type="interactions" value="3218"/>
</dbReference>
<dbReference type="IntAct" id="Q99504">
    <property type="interactions" value="32"/>
</dbReference>
<dbReference type="STRING" id="9606.ENSP00000362978"/>
<dbReference type="BindingDB" id="Q99504"/>
<dbReference type="ChEMBL" id="CHEMBL4296245"/>
<dbReference type="DrugCentral" id="Q99504"/>
<dbReference type="DEPOD" id="EYA3"/>
<dbReference type="GlyCosmos" id="Q99504">
    <property type="glycosylation" value="3 sites, 2 glycans"/>
</dbReference>
<dbReference type="GlyGen" id="Q99504">
    <property type="glycosylation" value="5 sites, 1 N-linked glycan (1 site), 2 O-linked glycans (4 sites)"/>
</dbReference>
<dbReference type="iPTMnet" id="Q99504"/>
<dbReference type="PhosphoSitePlus" id="Q99504"/>
<dbReference type="BioMuta" id="EYA3"/>
<dbReference type="DMDM" id="239938901"/>
<dbReference type="jPOST" id="Q99504"/>
<dbReference type="MassIVE" id="Q99504"/>
<dbReference type="PaxDb" id="9606-ENSP00000362978"/>
<dbReference type="PeptideAtlas" id="Q99504"/>
<dbReference type="ProteomicsDB" id="4324"/>
<dbReference type="ProteomicsDB" id="4738"/>
<dbReference type="ProteomicsDB" id="70790"/>
<dbReference type="ProteomicsDB" id="78305">
    <molecule id="Q99504-1"/>
</dbReference>
<dbReference type="ProteomicsDB" id="78306">
    <molecule id="Q99504-2"/>
</dbReference>
<dbReference type="Pumba" id="Q99504"/>
<dbReference type="TopDownProteomics" id="Q99504-2">
    <molecule id="Q99504-2"/>
</dbReference>
<dbReference type="Antibodypedia" id="16480">
    <property type="antibodies" value="163 antibodies from 27 providers"/>
</dbReference>
<dbReference type="DNASU" id="2140"/>
<dbReference type="Ensembl" id="ENST00000373863.3">
    <molecule id="Q99504-3"/>
    <property type="protein sequence ID" value="ENSP00000362970.3"/>
    <property type="gene ID" value="ENSG00000158161.16"/>
</dbReference>
<dbReference type="Ensembl" id="ENST00000373871.8">
    <molecule id="Q99504-1"/>
    <property type="protein sequence ID" value="ENSP00000362978.3"/>
    <property type="gene ID" value="ENSG00000158161.16"/>
</dbReference>
<dbReference type="Ensembl" id="ENST00000436342.6">
    <molecule id="Q99504-4"/>
    <property type="protein sequence ID" value="ENSP00000405587.3"/>
    <property type="gene ID" value="ENSG00000158161.16"/>
</dbReference>
<dbReference type="Ensembl" id="ENST00000540618.5">
    <molecule id="Q99504-5"/>
    <property type="protein sequence ID" value="ENSP00000442558.1"/>
    <property type="gene ID" value="ENSG00000158161.16"/>
</dbReference>
<dbReference type="GeneID" id="2140"/>
<dbReference type="KEGG" id="hsa:2140"/>
<dbReference type="MANE-Select" id="ENST00000373871.8">
    <property type="protein sequence ID" value="ENSP00000362978.3"/>
    <property type="RefSeq nucleotide sequence ID" value="NM_001990.4"/>
    <property type="RefSeq protein sequence ID" value="NP_001981.2"/>
</dbReference>
<dbReference type="UCSC" id="uc001bpi.3">
    <molecule id="Q99504-1"/>
    <property type="organism name" value="human"/>
</dbReference>
<dbReference type="AGR" id="HGNC:3521"/>
<dbReference type="CTD" id="2140"/>
<dbReference type="DisGeNET" id="2140"/>
<dbReference type="GeneCards" id="EYA3"/>
<dbReference type="HGNC" id="HGNC:3521">
    <property type="gene designation" value="EYA3"/>
</dbReference>
<dbReference type="HPA" id="ENSG00000158161">
    <property type="expression patterns" value="Low tissue specificity"/>
</dbReference>
<dbReference type="MIM" id="601655">
    <property type="type" value="gene"/>
</dbReference>
<dbReference type="neXtProt" id="NX_Q99504"/>
<dbReference type="OpenTargets" id="ENSG00000158161"/>
<dbReference type="PharmGKB" id="PA27933"/>
<dbReference type="VEuPathDB" id="HostDB:ENSG00000158161"/>
<dbReference type="eggNOG" id="KOG3107">
    <property type="taxonomic scope" value="Eukaryota"/>
</dbReference>
<dbReference type="GeneTree" id="ENSGT00950000182978"/>
<dbReference type="HOGENOM" id="CLU_021184_2_1_1"/>
<dbReference type="InParanoid" id="Q99504"/>
<dbReference type="OMA" id="XLLSPQR"/>
<dbReference type="OrthoDB" id="167668at2759"/>
<dbReference type="PAN-GO" id="Q99504">
    <property type="GO annotations" value="7 GO annotations based on evolutionary models"/>
</dbReference>
<dbReference type="PhylomeDB" id="Q99504"/>
<dbReference type="TreeFam" id="TF319337"/>
<dbReference type="PathwayCommons" id="Q99504"/>
<dbReference type="Reactome" id="R-HSA-5693565">
    <property type="pathway name" value="Recruitment and ATM-mediated phosphorylation of repair and signaling proteins at DNA double strand breaks"/>
</dbReference>
<dbReference type="SABIO-RK" id="Q99504"/>
<dbReference type="SignaLink" id="Q99504"/>
<dbReference type="SIGNOR" id="Q99504"/>
<dbReference type="BioGRID-ORCS" id="2140">
    <property type="hits" value="15 hits in 1180 CRISPR screens"/>
</dbReference>
<dbReference type="ChiTaRS" id="EYA3">
    <property type="organism name" value="human"/>
</dbReference>
<dbReference type="GenomeRNAi" id="2140"/>
<dbReference type="Pharos" id="Q99504">
    <property type="development level" value="Tbio"/>
</dbReference>
<dbReference type="PRO" id="PR:Q99504"/>
<dbReference type="Proteomes" id="UP000005640">
    <property type="component" value="Chromosome 1"/>
</dbReference>
<dbReference type="RNAct" id="Q99504">
    <property type="molecule type" value="protein"/>
</dbReference>
<dbReference type="Bgee" id="ENSG00000158161">
    <property type="expression patterns" value="Expressed in esophagus squamous epithelium and 182 other cell types or tissues"/>
</dbReference>
<dbReference type="ExpressionAtlas" id="Q99504">
    <property type="expression patterns" value="baseline and differential"/>
</dbReference>
<dbReference type="GO" id="GO:0005813">
    <property type="term" value="C:centrosome"/>
    <property type="evidence" value="ECO:0000314"/>
    <property type="project" value="HPA"/>
</dbReference>
<dbReference type="GO" id="GO:0005737">
    <property type="term" value="C:cytoplasm"/>
    <property type="evidence" value="ECO:0007669"/>
    <property type="project" value="UniProtKB-SubCell"/>
</dbReference>
<dbReference type="GO" id="GO:0005654">
    <property type="term" value="C:nucleoplasm"/>
    <property type="evidence" value="ECO:0000314"/>
    <property type="project" value="HPA"/>
</dbReference>
<dbReference type="GO" id="GO:0005634">
    <property type="term" value="C:nucleus"/>
    <property type="evidence" value="ECO:0000314"/>
    <property type="project" value="UniProtKB"/>
</dbReference>
<dbReference type="GO" id="GO:0140793">
    <property type="term" value="F:histone H2AXY142 phosphatase activity"/>
    <property type="evidence" value="ECO:0000314"/>
    <property type="project" value="UniProtKB"/>
</dbReference>
<dbReference type="GO" id="GO:0046872">
    <property type="term" value="F:metal ion binding"/>
    <property type="evidence" value="ECO:0007669"/>
    <property type="project" value="UniProtKB-KW"/>
</dbReference>
<dbReference type="GO" id="GO:0004725">
    <property type="term" value="F:protein tyrosine phosphatase activity"/>
    <property type="evidence" value="ECO:0000314"/>
    <property type="project" value="UniProtKB"/>
</dbReference>
<dbReference type="GO" id="GO:0009653">
    <property type="term" value="P:anatomical structure morphogenesis"/>
    <property type="evidence" value="ECO:0000304"/>
    <property type="project" value="ProtInc"/>
</dbReference>
<dbReference type="GO" id="GO:0030154">
    <property type="term" value="P:cell differentiation"/>
    <property type="evidence" value="ECO:0000318"/>
    <property type="project" value="GO_Central"/>
</dbReference>
<dbReference type="GO" id="GO:0006302">
    <property type="term" value="P:double-strand break repair"/>
    <property type="evidence" value="ECO:0000315"/>
    <property type="project" value="UniProtKB"/>
</dbReference>
<dbReference type="GO" id="GO:2001240">
    <property type="term" value="P:negative regulation of extrinsic apoptotic signaling pathway in absence of ligand"/>
    <property type="evidence" value="ECO:0000318"/>
    <property type="project" value="GO_Central"/>
</dbReference>
<dbReference type="GO" id="GO:0045739">
    <property type="term" value="P:positive regulation of DNA repair"/>
    <property type="evidence" value="ECO:0000315"/>
    <property type="project" value="UniProtKB"/>
</dbReference>
<dbReference type="GO" id="GO:0010212">
    <property type="term" value="P:response to ionizing radiation"/>
    <property type="evidence" value="ECO:0000314"/>
    <property type="project" value="UniProtKB"/>
</dbReference>
<dbReference type="GO" id="GO:0007601">
    <property type="term" value="P:visual perception"/>
    <property type="evidence" value="ECO:0000304"/>
    <property type="project" value="ProtInc"/>
</dbReference>
<dbReference type="CDD" id="cd02601">
    <property type="entry name" value="HAD_Eya"/>
    <property type="match status" value="1"/>
</dbReference>
<dbReference type="FunFam" id="3.40.50.12350:FF:000002">
    <property type="entry name" value="Eyes absent homolog"/>
    <property type="match status" value="1"/>
</dbReference>
<dbReference type="Gene3D" id="3.40.50.12350">
    <property type="match status" value="1"/>
</dbReference>
<dbReference type="InterPro" id="IPR028472">
    <property type="entry name" value="EYA"/>
</dbReference>
<dbReference type="InterPro" id="IPR006545">
    <property type="entry name" value="EYA_dom"/>
</dbReference>
<dbReference type="InterPro" id="IPR042577">
    <property type="entry name" value="EYA_dom_metazoan"/>
</dbReference>
<dbReference type="InterPro" id="IPR038102">
    <property type="entry name" value="EYA_dom_sf"/>
</dbReference>
<dbReference type="NCBIfam" id="TIGR01658">
    <property type="entry name" value="EYA-cons_domain"/>
    <property type="match status" value="1"/>
</dbReference>
<dbReference type="PANTHER" id="PTHR10190">
    <property type="entry name" value="EYES ABSENT"/>
    <property type="match status" value="1"/>
</dbReference>
<dbReference type="PANTHER" id="PTHR10190:SF5">
    <property type="entry name" value="EYES ABSENT HOMOLOG 3"/>
    <property type="match status" value="1"/>
</dbReference>
<dbReference type="Pfam" id="PF00702">
    <property type="entry name" value="Hydrolase"/>
    <property type="match status" value="1"/>
</dbReference>
<dbReference type="SFLD" id="SFLDG01129">
    <property type="entry name" value="C1.5:_HAD__Beta-PGM__Phosphata"/>
    <property type="match status" value="1"/>
</dbReference>
<dbReference type="SFLD" id="SFLDS00003">
    <property type="entry name" value="Haloacid_Dehalogenase"/>
    <property type="match status" value="1"/>
</dbReference>
<evidence type="ECO:0000250" key="1">
    <source>
        <dbReference type="UniProtKB" id="O00167"/>
    </source>
</evidence>
<evidence type="ECO:0000250" key="2">
    <source>
        <dbReference type="UniProtKB" id="P97480"/>
    </source>
</evidence>
<evidence type="ECO:0000256" key="3">
    <source>
        <dbReference type="SAM" id="MobiDB-lite"/>
    </source>
</evidence>
<evidence type="ECO:0000269" key="4">
    <source>
    </source>
</evidence>
<evidence type="ECO:0000269" key="5">
    <source>
    </source>
</evidence>
<evidence type="ECO:0000303" key="6">
    <source>
    </source>
</evidence>
<evidence type="ECO:0000303" key="7">
    <source>
    </source>
</evidence>
<evidence type="ECO:0000303" key="8">
    <source>
    </source>
</evidence>
<evidence type="ECO:0000305" key="9"/>
<evidence type="ECO:0007744" key="10">
    <source>
    </source>
</evidence>
<evidence type="ECO:0007744" key="11">
    <source>
    </source>
</evidence>
<evidence type="ECO:0007744" key="12">
    <source>
    </source>
</evidence>
<name>EYA3_HUMAN</name>
<comment type="function">
    <text evidence="2 4 5">Tyrosine phosphatase that specifically dephosphorylates 'Tyr-142' of histone H2AX (H2AXY142ph). 'Tyr-142' phosphorylation of histone H2AX plays a central role in DNA repair and acts as a mark that distinguishes between apoptotic and repair responses to genotoxic stress. Promotes efficient DNA repair by dephosphorylating H2AX, promoting the recruitment of DNA repair complexes containing MDC1 (PubMed:19234442, PubMed:19351884). Its function as histone phosphatase probably explains its role in transcription regulation during organogenesis. Coactivates SIX1, and seems to coactivate SIX2, SIX4 and SIX5. The repression of precursor cell proliferation in myoblasts by SIX1 is switched to activation through recruitment of EYA3 to the SIX1-DACH1 complex and seems to be dependent on EYA3 phosphatase activity (By similarity). May be involved in development of the eye.</text>
</comment>
<comment type="catalytic activity">
    <reaction evidence="4 5">
        <text>O-phospho-L-tyrosyl-[protein] + H2O = L-tyrosyl-[protein] + phosphate</text>
        <dbReference type="Rhea" id="RHEA:10684"/>
        <dbReference type="Rhea" id="RHEA-COMP:10136"/>
        <dbReference type="Rhea" id="RHEA-COMP:20101"/>
        <dbReference type="ChEBI" id="CHEBI:15377"/>
        <dbReference type="ChEBI" id="CHEBI:43474"/>
        <dbReference type="ChEBI" id="CHEBI:46858"/>
        <dbReference type="ChEBI" id="CHEBI:61978"/>
        <dbReference type="EC" id="3.1.3.48"/>
    </reaction>
</comment>
<comment type="cofactor">
    <cofactor evidence="1">
        <name>Mg(2+)</name>
        <dbReference type="ChEBI" id="CHEBI:18420"/>
    </cofactor>
    <text evidence="1">Binds 1 Mg(2+) ion per subunit.</text>
</comment>
<comment type="biophysicochemical properties">
    <kinetics>
        <KM evidence="5">1.8 uM for H2AXY142ph</KM>
        <KM evidence="5">72 uM for H2AXS139ph</KM>
    </kinetics>
</comment>
<comment type="subunit">
    <text evidence="2">Interacts with SIX1 and DACH1, and probably SIX2, SIX4, SIX5.</text>
</comment>
<comment type="interaction">
    <interactant intactId="EBI-9089567">
        <id>Q99504</id>
    </interactant>
    <interactant intactId="EBI-21535880">
        <id>Q92870-2</id>
        <label>APBB2</label>
    </interactant>
    <organismsDiffer>false</organismsDiffer>
    <experiments>3</experiments>
</comment>
<comment type="interaction">
    <interactant intactId="EBI-9089567">
        <id>Q99504</id>
    </interactant>
    <interactant intactId="EBI-948169">
        <id>P13637</id>
        <label>ATP1A3</label>
    </interactant>
    <organismsDiffer>false</organismsDiffer>
    <experiments>3</experiments>
</comment>
<comment type="interaction">
    <interactant intactId="EBI-9089567">
        <id>Q99504</id>
    </interactant>
    <interactant intactId="EBI-10968534">
        <id>P50570-2</id>
        <label>DNM2</label>
    </interactant>
    <organismsDiffer>false</organismsDiffer>
    <experiments>3</experiments>
</comment>
<comment type="interaction">
    <interactant intactId="EBI-9089567">
        <id>Q99504</id>
    </interactant>
    <interactant intactId="EBI-21603100">
        <id>P26378-2</id>
        <label>ELAVL4</label>
    </interactant>
    <organismsDiffer>false</organismsDiffer>
    <experiments>3</experiments>
</comment>
<comment type="interaction">
    <interactant intactId="EBI-9089567">
        <id>Q99504</id>
    </interactant>
    <interactant intactId="EBI-352528">
        <id>P10809</id>
        <label>HSPD1</label>
    </interactant>
    <organismsDiffer>false</organismsDiffer>
    <experiments>3</experiments>
</comment>
<comment type="interaction">
    <interactant intactId="EBI-9089567">
        <id>Q99504</id>
    </interactant>
    <interactant intactId="EBI-466029">
        <id>P42858</id>
        <label>HTT</label>
    </interactant>
    <organismsDiffer>false</organismsDiffer>
    <experiments>6</experiments>
</comment>
<comment type="interaction">
    <interactant intactId="EBI-9089567">
        <id>Q99504</id>
    </interactant>
    <interactant intactId="EBI-10975473">
        <id>O60333-2</id>
        <label>KIF1B</label>
    </interactant>
    <organismsDiffer>false</organismsDiffer>
    <experiments>3</experiments>
</comment>
<comment type="interaction">
    <interactant intactId="EBI-9089567">
        <id>Q99504</id>
    </interactant>
    <interactant intactId="EBI-1189067">
        <id>P51608</id>
        <label>MECP2</label>
    </interactant>
    <organismsDiffer>false</organismsDiffer>
    <experiments>3</experiments>
</comment>
<comment type="interaction">
    <interactant intactId="EBI-9089567">
        <id>Q99504</id>
    </interactant>
    <interactant intactId="EBI-475646">
        <id>P07196</id>
        <label>NEFL</label>
    </interactant>
    <organismsDiffer>false</organismsDiffer>
    <experiments>3</experiments>
</comment>
<comment type="interaction">
    <interactant intactId="EBI-9089567">
        <id>Q99504</id>
    </interactant>
    <interactant intactId="EBI-716404">
        <id>P16284</id>
        <label>PECAM1</label>
    </interactant>
    <organismsDiffer>false</organismsDiffer>
    <experiments>3</experiments>
</comment>
<comment type="interaction">
    <interactant intactId="EBI-9089567">
        <id>Q99504</id>
    </interactant>
    <interactant intactId="EBI-50433196">
        <id>A0A6Q8PF08</id>
        <label>PMP22</label>
    </interactant>
    <organismsDiffer>false</organismsDiffer>
    <experiments>3</experiments>
</comment>
<comment type="interaction">
    <interactant intactId="EBI-9089567">
        <id>Q99504</id>
    </interactant>
    <interactant intactId="EBI-396669">
        <id>Q9Y3C5</id>
        <label>RNF11</label>
    </interactant>
    <organismsDiffer>false</organismsDiffer>
    <experiments>3</experiments>
</comment>
<comment type="interaction">
    <interactant intactId="EBI-9089567">
        <id>Q99504</id>
    </interactant>
    <interactant intactId="EBI-720609">
        <id>O76024</id>
        <label>WFS1</label>
    </interactant>
    <organismsDiffer>false</organismsDiffer>
    <experiments>3</experiments>
</comment>
<comment type="subcellular location">
    <subcellularLocation>
        <location evidence="2">Cytoplasm</location>
    </subcellularLocation>
    <subcellularLocation>
        <location evidence="4">Nucleus</location>
    </subcellularLocation>
    <text evidence="2 4">Localizes at sites of DNA damage at double-strand breaks (DSBs) (PubMed:19234442). With decreasing efficiency, translocalized to the nucleus by SIX2 and SIX5, and SIX4, respectively (By similarity).</text>
</comment>
<comment type="alternative products">
    <event type="alternative splicing"/>
    <isoform>
        <id>Q99504-1</id>
        <name>1</name>
        <sequence type="displayed"/>
    </isoform>
    <isoform>
        <id>Q99504-2</id>
        <name>2</name>
        <sequence type="described" ref="VSP_001493"/>
    </isoform>
    <isoform>
        <id>Q99504-3</id>
        <name>3</name>
        <sequence type="described" ref="VSP_054518 VSP_054519"/>
    </isoform>
    <isoform>
        <id>Q99504-4</id>
        <name>4</name>
        <sequence type="described" ref="VSP_054530"/>
    </isoform>
    <isoform>
        <id>Q99504-5</id>
        <name>5</name>
        <sequence type="described" ref="VSP_054518"/>
    </isoform>
</comment>
<comment type="PTM">
    <text evidence="4">Ser-266 phosphorylation is required for localization at sites of DNA damage and directing interaction with H2AX.</text>
</comment>
<comment type="similarity">
    <text evidence="9">Belongs to the HAD-like hydrolase superfamily. EYA family.</text>
</comment>